<proteinExistence type="inferred from homology"/>
<comment type="function">
    <text evidence="1">Catalyzes the transfer of the enolpyruvyl moiety of phosphoenolpyruvate (PEP) to the 5-hydroxyl of shikimate-3-phosphate (S3P) to produce enolpyruvyl shikimate-3-phosphate and inorganic phosphate.</text>
</comment>
<comment type="catalytic activity">
    <reaction evidence="1">
        <text>3-phosphoshikimate + phosphoenolpyruvate = 5-O-(1-carboxyvinyl)-3-phosphoshikimate + phosphate</text>
        <dbReference type="Rhea" id="RHEA:21256"/>
        <dbReference type="ChEBI" id="CHEBI:43474"/>
        <dbReference type="ChEBI" id="CHEBI:57701"/>
        <dbReference type="ChEBI" id="CHEBI:58702"/>
        <dbReference type="ChEBI" id="CHEBI:145989"/>
        <dbReference type="EC" id="2.5.1.19"/>
    </reaction>
    <physiologicalReaction direction="left-to-right" evidence="1">
        <dbReference type="Rhea" id="RHEA:21257"/>
    </physiologicalReaction>
</comment>
<comment type="pathway">
    <text evidence="1">Metabolic intermediate biosynthesis; chorismate biosynthesis.</text>
</comment>
<comment type="subunit">
    <text evidence="1">Monomer.</text>
</comment>
<comment type="subcellular location">
    <subcellularLocation>
        <location evidence="1">Cytoplasm</location>
    </subcellularLocation>
</comment>
<comment type="similarity">
    <text evidence="1">Belongs to the EPSP synthase family.</text>
</comment>
<feature type="chain" id="PRO_0000088333" description="3-phosphoshikimate 1-carboxyvinyltransferase">
    <location>
        <begin position="1"/>
        <end position="411"/>
    </location>
</feature>
<feature type="active site" description="Proton acceptor" evidence="1">
    <location>
        <position position="295"/>
    </location>
</feature>
<feature type="binding site" evidence="1">
    <location>
        <position position="20"/>
    </location>
    <ligand>
        <name>3-phosphoshikimate</name>
        <dbReference type="ChEBI" id="CHEBI:145989"/>
    </ligand>
</feature>
<feature type="binding site" evidence="1">
    <location>
        <position position="20"/>
    </location>
    <ligand>
        <name>phosphoenolpyruvate</name>
        <dbReference type="ChEBI" id="CHEBI:58702"/>
    </ligand>
</feature>
<feature type="binding site" evidence="1">
    <location>
        <position position="21"/>
    </location>
    <ligand>
        <name>3-phosphoshikimate</name>
        <dbReference type="ChEBI" id="CHEBI:145989"/>
    </ligand>
</feature>
<feature type="binding site" evidence="1">
    <location>
        <position position="25"/>
    </location>
    <ligand>
        <name>3-phosphoshikimate</name>
        <dbReference type="ChEBI" id="CHEBI:145989"/>
    </ligand>
</feature>
<feature type="binding site" evidence="1">
    <location>
        <position position="86"/>
    </location>
    <ligand>
        <name>phosphoenolpyruvate</name>
        <dbReference type="ChEBI" id="CHEBI:58702"/>
    </ligand>
</feature>
<feature type="binding site" evidence="1">
    <location>
        <position position="114"/>
    </location>
    <ligand>
        <name>phosphoenolpyruvate</name>
        <dbReference type="ChEBI" id="CHEBI:58702"/>
    </ligand>
</feature>
<feature type="binding site" evidence="1">
    <location>
        <position position="156"/>
    </location>
    <ligand>
        <name>3-phosphoshikimate</name>
        <dbReference type="ChEBI" id="CHEBI:145989"/>
    </ligand>
</feature>
<feature type="binding site" evidence="1">
    <location>
        <position position="157"/>
    </location>
    <ligand>
        <name>3-phosphoshikimate</name>
        <dbReference type="ChEBI" id="CHEBI:145989"/>
    </ligand>
</feature>
<feature type="binding site" evidence="1">
    <location>
        <position position="158"/>
    </location>
    <ligand>
        <name>3-phosphoshikimate</name>
        <dbReference type="ChEBI" id="CHEBI:145989"/>
    </ligand>
</feature>
<feature type="binding site" evidence="1">
    <location>
        <position position="158"/>
    </location>
    <ligand>
        <name>phosphoenolpyruvate</name>
        <dbReference type="ChEBI" id="CHEBI:58702"/>
    </ligand>
</feature>
<feature type="binding site" evidence="1">
    <location>
        <position position="181"/>
    </location>
    <ligand>
        <name>3-phosphoshikimate</name>
        <dbReference type="ChEBI" id="CHEBI:145989"/>
    </ligand>
</feature>
<feature type="binding site" evidence="1">
    <location>
        <position position="295"/>
    </location>
    <ligand>
        <name>3-phosphoshikimate</name>
        <dbReference type="ChEBI" id="CHEBI:145989"/>
    </ligand>
</feature>
<feature type="binding site" evidence="1">
    <location>
        <position position="322"/>
    </location>
    <ligand>
        <name>3-phosphoshikimate</name>
        <dbReference type="ChEBI" id="CHEBI:145989"/>
    </ligand>
</feature>
<feature type="binding site" evidence="1">
    <location>
        <position position="326"/>
    </location>
    <ligand>
        <name>phosphoenolpyruvate</name>
        <dbReference type="ChEBI" id="CHEBI:58702"/>
    </ligand>
</feature>
<feature type="binding site" evidence="1">
    <location>
        <position position="367"/>
    </location>
    <ligand>
        <name>phosphoenolpyruvate</name>
        <dbReference type="ChEBI" id="CHEBI:58702"/>
    </ligand>
</feature>
<feature type="binding site" evidence="1">
    <location>
        <position position="393"/>
    </location>
    <ligand>
        <name>phosphoenolpyruvate</name>
        <dbReference type="ChEBI" id="CHEBI:58702"/>
    </ligand>
</feature>
<protein>
    <recommendedName>
        <fullName evidence="1">3-phosphoshikimate 1-carboxyvinyltransferase</fullName>
        <ecNumber evidence="1">2.5.1.19</ecNumber>
    </recommendedName>
    <alternativeName>
        <fullName evidence="1">5-enolpyruvylshikimate-3-phosphate synthase</fullName>
        <shortName evidence="1">EPSP synthase</shortName>
        <shortName evidence="1">EPSPS</shortName>
    </alternativeName>
</protein>
<sequence>MNVRISGEFRPGVINAPSSKSFSQRYILYSAFSNIPVTLKNVSFSDDERIALEIARACGADIEFNDSLTIKPDFRCPDEINAGESGTSLRLATGLLAARRCKTFIHEEASLLKRPLDDLIKTLSEKNVVFNNLDNGIMIDASNSIPSDSIIDGGRSSQFVSSMMMYHSLTSGSLKALNIVSNDYIKITIKTLNDFGISVYSSNGFFEFGKTLMKGNKICIEGDYSSAAFWIVLGLFKGDIEIKNLKSDSCQPDAAIINIINGISERKIDIYNNKIVVHKTRFLGDLYIDVDKNPDLAPPLSIIGIFSDVAVHILNYRRLEIKESNREENIISMARSFGALIEKNDNEMVIRRGKISLPERISFSDHRMIMSSIIAGLISSGDILYENIENINKSYPGFLNDLSNLGYYILK</sequence>
<reference key="1">
    <citation type="journal article" date="2004" name="Proc. Natl. Acad. Sci. U.S.A.">
        <title>Genome sequence of Picrophilus torridus and its implications for life around pH 0.</title>
        <authorList>
            <person name="Fuetterer O."/>
            <person name="Angelov A."/>
            <person name="Liesegang H."/>
            <person name="Gottschalk G."/>
            <person name="Schleper C."/>
            <person name="Schepers B."/>
            <person name="Dock C."/>
            <person name="Antranikian G."/>
            <person name="Liebl W."/>
        </authorList>
    </citation>
    <scope>NUCLEOTIDE SEQUENCE [LARGE SCALE GENOMIC DNA]</scope>
    <source>
        <strain>ATCC 700027 / DSM 9790 / JCM 10055 / NBRC 100828 / KAW 2/3</strain>
    </source>
</reference>
<organism>
    <name type="scientific">Picrophilus torridus (strain ATCC 700027 / DSM 9790 / JCM 10055 / NBRC 100828 / KAW 2/3)</name>
    <dbReference type="NCBI Taxonomy" id="1122961"/>
    <lineage>
        <taxon>Archaea</taxon>
        <taxon>Methanobacteriati</taxon>
        <taxon>Thermoplasmatota</taxon>
        <taxon>Thermoplasmata</taxon>
        <taxon>Thermoplasmatales</taxon>
        <taxon>Picrophilaceae</taxon>
        <taxon>Picrophilus</taxon>
    </lineage>
</organism>
<gene>
    <name evidence="1" type="primary">aroA</name>
    <name type="ordered locus">PTO0602</name>
</gene>
<evidence type="ECO:0000255" key="1">
    <source>
        <dbReference type="HAMAP-Rule" id="MF_00210"/>
    </source>
</evidence>
<name>AROA_PICTO</name>
<dbReference type="EC" id="2.5.1.19" evidence="1"/>
<dbReference type="EMBL" id="AE017261">
    <property type="protein sequence ID" value="AAT43187.1"/>
    <property type="molecule type" value="Genomic_DNA"/>
</dbReference>
<dbReference type="RefSeq" id="WP_011177403.1">
    <property type="nucleotide sequence ID" value="NC_005877.1"/>
</dbReference>
<dbReference type="SMR" id="Q6L1G5"/>
<dbReference type="FunCoup" id="Q6L1G5">
    <property type="interactions" value="129"/>
</dbReference>
<dbReference type="STRING" id="263820.PTO0602"/>
<dbReference type="PaxDb" id="263820-PTO0602"/>
<dbReference type="GeneID" id="2844905"/>
<dbReference type="KEGG" id="pto:PTO0602"/>
<dbReference type="eggNOG" id="arCOG04134">
    <property type="taxonomic scope" value="Archaea"/>
</dbReference>
<dbReference type="HOGENOM" id="CLU_024321_0_0_2"/>
<dbReference type="InParanoid" id="Q6L1G5"/>
<dbReference type="OrthoDB" id="43788at2157"/>
<dbReference type="UniPathway" id="UPA00053"/>
<dbReference type="Proteomes" id="UP000000438">
    <property type="component" value="Chromosome"/>
</dbReference>
<dbReference type="GO" id="GO:0005737">
    <property type="term" value="C:cytoplasm"/>
    <property type="evidence" value="ECO:0007669"/>
    <property type="project" value="UniProtKB-SubCell"/>
</dbReference>
<dbReference type="GO" id="GO:0003866">
    <property type="term" value="F:3-phosphoshikimate 1-carboxyvinyltransferase activity"/>
    <property type="evidence" value="ECO:0007669"/>
    <property type="project" value="UniProtKB-UniRule"/>
</dbReference>
<dbReference type="GO" id="GO:0008652">
    <property type="term" value="P:amino acid biosynthetic process"/>
    <property type="evidence" value="ECO:0007669"/>
    <property type="project" value="UniProtKB-KW"/>
</dbReference>
<dbReference type="GO" id="GO:0009073">
    <property type="term" value="P:aromatic amino acid family biosynthetic process"/>
    <property type="evidence" value="ECO:0007669"/>
    <property type="project" value="UniProtKB-KW"/>
</dbReference>
<dbReference type="GO" id="GO:0009423">
    <property type="term" value="P:chorismate biosynthetic process"/>
    <property type="evidence" value="ECO:0007669"/>
    <property type="project" value="UniProtKB-UniRule"/>
</dbReference>
<dbReference type="CDD" id="cd01556">
    <property type="entry name" value="EPSP_synthase"/>
    <property type="match status" value="1"/>
</dbReference>
<dbReference type="Gene3D" id="3.65.10.10">
    <property type="entry name" value="Enolpyruvate transferase domain"/>
    <property type="match status" value="2"/>
</dbReference>
<dbReference type="HAMAP" id="MF_00210">
    <property type="entry name" value="EPSP_synth"/>
    <property type="match status" value="1"/>
</dbReference>
<dbReference type="InterPro" id="IPR001986">
    <property type="entry name" value="Enolpyruvate_Tfrase_dom"/>
</dbReference>
<dbReference type="InterPro" id="IPR036968">
    <property type="entry name" value="Enolpyruvate_Tfrase_sf"/>
</dbReference>
<dbReference type="InterPro" id="IPR006264">
    <property type="entry name" value="EPSP_synthase"/>
</dbReference>
<dbReference type="InterPro" id="IPR013792">
    <property type="entry name" value="RNA3'P_cycl/enolpyr_Trfase_a/b"/>
</dbReference>
<dbReference type="PANTHER" id="PTHR21090">
    <property type="entry name" value="AROM/DEHYDROQUINATE SYNTHASE"/>
    <property type="match status" value="1"/>
</dbReference>
<dbReference type="PANTHER" id="PTHR21090:SF5">
    <property type="entry name" value="PENTAFUNCTIONAL AROM POLYPEPTIDE"/>
    <property type="match status" value="1"/>
</dbReference>
<dbReference type="Pfam" id="PF00275">
    <property type="entry name" value="EPSP_synthase"/>
    <property type="match status" value="1"/>
</dbReference>
<dbReference type="PIRSF" id="PIRSF000505">
    <property type="entry name" value="EPSPS"/>
    <property type="match status" value="1"/>
</dbReference>
<dbReference type="SUPFAM" id="SSF55205">
    <property type="entry name" value="EPT/RTPC-like"/>
    <property type="match status" value="1"/>
</dbReference>
<accession>Q6L1G5</accession>
<keyword id="KW-0028">Amino-acid biosynthesis</keyword>
<keyword id="KW-0057">Aromatic amino acid biosynthesis</keyword>
<keyword id="KW-0963">Cytoplasm</keyword>
<keyword id="KW-0808">Transferase</keyword>